<gene>
    <name evidence="1" type="primary">murQ</name>
    <name type="ordered locus">BT_0133</name>
</gene>
<dbReference type="EC" id="4.2.1.126" evidence="1"/>
<dbReference type="EMBL" id="AE015928">
    <property type="protein sequence ID" value="AAO75240.1"/>
    <property type="molecule type" value="Genomic_DNA"/>
</dbReference>
<dbReference type="RefSeq" id="NP_809046.1">
    <property type="nucleotide sequence ID" value="NC_004663.1"/>
</dbReference>
<dbReference type="RefSeq" id="WP_008760452.1">
    <property type="nucleotide sequence ID" value="NC_004663.1"/>
</dbReference>
<dbReference type="SMR" id="Q8ABH7"/>
<dbReference type="FunCoup" id="Q8ABH7">
    <property type="interactions" value="127"/>
</dbReference>
<dbReference type="STRING" id="226186.BT_0133"/>
<dbReference type="PaxDb" id="226186-BT_0133"/>
<dbReference type="EnsemblBacteria" id="AAO75240">
    <property type="protein sequence ID" value="AAO75240"/>
    <property type="gene ID" value="BT_0133"/>
</dbReference>
<dbReference type="GeneID" id="60926099"/>
<dbReference type="KEGG" id="bth:BT_0133"/>
<dbReference type="PATRIC" id="fig|226186.12.peg.130"/>
<dbReference type="eggNOG" id="COG2103">
    <property type="taxonomic scope" value="Bacteria"/>
</dbReference>
<dbReference type="HOGENOM" id="CLU_049049_1_1_10"/>
<dbReference type="InParanoid" id="Q8ABH7"/>
<dbReference type="OrthoDB" id="9813395at2"/>
<dbReference type="UniPathway" id="UPA00342"/>
<dbReference type="Proteomes" id="UP000001414">
    <property type="component" value="Chromosome"/>
</dbReference>
<dbReference type="GO" id="GO:0097367">
    <property type="term" value="F:carbohydrate derivative binding"/>
    <property type="evidence" value="ECO:0007669"/>
    <property type="project" value="InterPro"/>
</dbReference>
<dbReference type="GO" id="GO:0016835">
    <property type="term" value="F:carbon-oxygen lyase activity"/>
    <property type="evidence" value="ECO:0000318"/>
    <property type="project" value="GO_Central"/>
</dbReference>
<dbReference type="GO" id="GO:0016803">
    <property type="term" value="F:ether hydrolase activity"/>
    <property type="evidence" value="ECO:0000318"/>
    <property type="project" value="GO_Central"/>
</dbReference>
<dbReference type="GO" id="GO:0046348">
    <property type="term" value="P:amino sugar catabolic process"/>
    <property type="evidence" value="ECO:0000318"/>
    <property type="project" value="GO_Central"/>
</dbReference>
<dbReference type="GO" id="GO:0097173">
    <property type="term" value="P:N-acetylmuramic acid catabolic process"/>
    <property type="evidence" value="ECO:0007669"/>
    <property type="project" value="UniProtKB-UniPathway"/>
</dbReference>
<dbReference type="GO" id="GO:0009254">
    <property type="term" value="P:peptidoglycan turnover"/>
    <property type="evidence" value="ECO:0000318"/>
    <property type="project" value="GO_Central"/>
</dbReference>
<dbReference type="CDD" id="cd05007">
    <property type="entry name" value="SIS_Etherase"/>
    <property type="match status" value="1"/>
</dbReference>
<dbReference type="FunFam" id="3.40.50.10490:FF:000014">
    <property type="entry name" value="N-acetylmuramic acid 6-phosphate etherase"/>
    <property type="match status" value="1"/>
</dbReference>
<dbReference type="Gene3D" id="1.10.8.1080">
    <property type="match status" value="1"/>
</dbReference>
<dbReference type="Gene3D" id="3.40.50.10490">
    <property type="entry name" value="Glucose-6-phosphate isomerase like protein, domain 1"/>
    <property type="match status" value="1"/>
</dbReference>
<dbReference type="HAMAP" id="MF_00068">
    <property type="entry name" value="MurQ"/>
    <property type="match status" value="1"/>
</dbReference>
<dbReference type="InterPro" id="IPR005488">
    <property type="entry name" value="Etherase_MurQ"/>
</dbReference>
<dbReference type="InterPro" id="IPR005486">
    <property type="entry name" value="Glucokinase_regulatory_CS"/>
</dbReference>
<dbReference type="InterPro" id="IPR040190">
    <property type="entry name" value="MURQ/GCKR"/>
</dbReference>
<dbReference type="InterPro" id="IPR001347">
    <property type="entry name" value="SIS_dom"/>
</dbReference>
<dbReference type="InterPro" id="IPR046348">
    <property type="entry name" value="SIS_dom_sf"/>
</dbReference>
<dbReference type="NCBIfam" id="TIGR00274">
    <property type="entry name" value="N-acetylmuramic acid 6-phosphate etherase"/>
    <property type="match status" value="1"/>
</dbReference>
<dbReference type="NCBIfam" id="NF003915">
    <property type="entry name" value="PRK05441.1"/>
    <property type="match status" value="1"/>
</dbReference>
<dbReference type="NCBIfam" id="NF009222">
    <property type="entry name" value="PRK12570.1"/>
    <property type="match status" value="1"/>
</dbReference>
<dbReference type="PANTHER" id="PTHR10088">
    <property type="entry name" value="GLUCOKINASE REGULATORY PROTEIN"/>
    <property type="match status" value="1"/>
</dbReference>
<dbReference type="PANTHER" id="PTHR10088:SF4">
    <property type="entry name" value="GLUCOKINASE REGULATORY PROTEIN"/>
    <property type="match status" value="1"/>
</dbReference>
<dbReference type="Pfam" id="PF22645">
    <property type="entry name" value="GKRP_SIS_N"/>
    <property type="match status" value="1"/>
</dbReference>
<dbReference type="SUPFAM" id="SSF53697">
    <property type="entry name" value="SIS domain"/>
    <property type="match status" value="1"/>
</dbReference>
<dbReference type="PROSITE" id="PS01272">
    <property type="entry name" value="GCKR"/>
    <property type="match status" value="1"/>
</dbReference>
<dbReference type="PROSITE" id="PS51464">
    <property type="entry name" value="SIS"/>
    <property type="match status" value="1"/>
</dbReference>
<name>MURQ_BACTN</name>
<keyword id="KW-0119">Carbohydrate metabolism</keyword>
<keyword id="KW-0456">Lyase</keyword>
<keyword id="KW-1185">Reference proteome</keyword>
<organism>
    <name type="scientific">Bacteroides thetaiotaomicron (strain ATCC 29148 / DSM 2079 / JCM 5827 / CCUG 10774 / NCTC 10582 / VPI-5482 / E50)</name>
    <dbReference type="NCBI Taxonomy" id="226186"/>
    <lineage>
        <taxon>Bacteria</taxon>
        <taxon>Pseudomonadati</taxon>
        <taxon>Bacteroidota</taxon>
        <taxon>Bacteroidia</taxon>
        <taxon>Bacteroidales</taxon>
        <taxon>Bacteroidaceae</taxon>
        <taxon>Bacteroides</taxon>
    </lineage>
</organism>
<reference key="1">
    <citation type="journal article" date="2003" name="Science">
        <title>A genomic view of the human-Bacteroides thetaiotaomicron symbiosis.</title>
        <authorList>
            <person name="Xu J."/>
            <person name="Bjursell M.K."/>
            <person name="Himrod J."/>
            <person name="Deng S."/>
            <person name="Carmichael L.K."/>
            <person name="Chiang H.C."/>
            <person name="Hooper L.V."/>
            <person name="Gordon J.I."/>
        </authorList>
    </citation>
    <scope>NUCLEOTIDE SEQUENCE [LARGE SCALE GENOMIC DNA]</scope>
    <source>
        <strain>ATCC 29148 / DSM 2079 / JCM 5827 / CCUG 10774 / NCTC 10582 / VPI-5482 / E50</strain>
    </source>
</reference>
<protein>
    <recommendedName>
        <fullName evidence="1">N-acetylmuramic acid 6-phosphate etherase</fullName>
        <shortName evidence="1">MurNAc-6-P etherase</shortName>
        <ecNumber evidence="1">4.2.1.126</ecNumber>
    </recommendedName>
    <alternativeName>
        <fullName evidence="1">N-acetylmuramic acid 6-phosphate hydrolase</fullName>
    </alternativeName>
    <alternativeName>
        <fullName evidence="1">N-acetylmuramic acid 6-phosphate lyase</fullName>
    </alternativeName>
</protein>
<accession>Q8ABH7</accession>
<comment type="function">
    <text evidence="1">Specifically catalyzes the cleavage of the D-lactyl ether substituent of MurNAc 6-phosphate, producing GlcNAc 6-phosphate and D-lactate.</text>
</comment>
<comment type="catalytic activity">
    <reaction evidence="1">
        <text>N-acetyl-D-muramate 6-phosphate + H2O = N-acetyl-D-glucosamine 6-phosphate + (R)-lactate</text>
        <dbReference type="Rhea" id="RHEA:26410"/>
        <dbReference type="ChEBI" id="CHEBI:15377"/>
        <dbReference type="ChEBI" id="CHEBI:16004"/>
        <dbReference type="ChEBI" id="CHEBI:57513"/>
        <dbReference type="ChEBI" id="CHEBI:58722"/>
        <dbReference type="EC" id="4.2.1.126"/>
    </reaction>
</comment>
<comment type="pathway">
    <text evidence="1">Amino-sugar metabolism; N-acetylmuramate degradation.</text>
</comment>
<comment type="subunit">
    <text evidence="1">Homodimer.</text>
</comment>
<comment type="miscellaneous">
    <text evidence="1">A lyase-type mechanism (elimination/hydration) is suggested for the cleavage of the lactyl ether bond of MurNAc 6-phosphate, with the formation of an alpha,beta-unsaturated aldehyde intermediate with (E)-stereochemistry, followed by the syn addition of water to give product.</text>
</comment>
<comment type="similarity">
    <text evidence="1">Belongs to the GCKR-like family. MurNAc-6-P etherase subfamily.</text>
</comment>
<sequence>MEFIKITEQPSLYDDLDKKSVKEILEDINTEDHKVADAVQKAIPQIEKLVTLIIPRVKKGGRIFYMGAGTSGRLGVLDASEIPPTFGMPPTVVIGLIAGGDTALRNPVENAEDDMSRGWEELLQHHINSEDTVIGIAASGTTPYVIGAMRTAREHGILTGCITSNPNSPMATEADVPIEVIVGPEYVTGSSRMKSGTAQKMILNMISTTIMIELGRVQGNKMVNMQLSNQKLIDRGTRMIIEELHLDYEKAEALLLLHGSVKSAIEAYRRHNSTQQE</sequence>
<feature type="chain" id="PRO_0000249614" description="N-acetylmuramic acid 6-phosphate etherase">
    <location>
        <begin position="1"/>
        <end position="277"/>
    </location>
</feature>
<feature type="domain" description="SIS" evidence="1">
    <location>
        <begin position="53"/>
        <end position="216"/>
    </location>
</feature>
<feature type="active site" description="Proton donor" evidence="1">
    <location>
        <position position="81"/>
    </location>
</feature>
<feature type="active site" evidence="1">
    <location>
        <position position="112"/>
    </location>
</feature>
<evidence type="ECO:0000255" key="1">
    <source>
        <dbReference type="HAMAP-Rule" id="MF_00068"/>
    </source>
</evidence>
<proteinExistence type="inferred from homology"/>